<organism>
    <name type="scientific">Clostridium perfringens (strain ATCC 13124 / DSM 756 / JCM 1290 / NCIMB 6125 / NCTC 8237 / Type A)</name>
    <dbReference type="NCBI Taxonomy" id="195103"/>
    <lineage>
        <taxon>Bacteria</taxon>
        <taxon>Bacillati</taxon>
        <taxon>Bacillota</taxon>
        <taxon>Clostridia</taxon>
        <taxon>Eubacteriales</taxon>
        <taxon>Clostridiaceae</taxon>
        <taxon>Clostridium</taxon>
    </lineage>
</organism>
<accession>Q0TUQ5</accession>
<keyword id="KW-0071">Autoinducer synthesis</keyword>
<keyword id="KW-0408">Iron</keyword>
<keyword id="KW-0456">Lyase</keyword>
<keyword id="KW-0479">Metal-binding</keyword>
<keyword id="KW-0673">Quorum sensing</keyword>
<proteinExistence type="inferred from homology"/>
<sequence length="151" mass="16931">MVKVESFELDHTKVKAPYVRKAGIKIGPKGDIVSKFDLRFVQPNKELLSDKGMHTLEHFLAGFMREKLDDVIDISPMGCKTGFYLTSFGDINVKDIIEALEYSLSKVLEQEEIPAANELQCGSAKLHSLELAKSHAKQVLENGISDKFYVE</sequence>
<name>LUXS_CLOP1</name>
<comment type="function">
    <text evidence="1">Involved in the synthesis of autoinducer 2 (AI-2) which is secreted by bacteria and is used to communicate both the cell density and the metabolic potential of the environment. The regulation of gene expression in response to changes in cell density is called quorum sensing. Catalyzes the transformation of S-ribosylhomocysteine (RHC) to homocysteine (HC) and 4,5-dihydroxy-2,3-pentadione (DPD).</text>
</comment>
<comment type="catalytic activity">
    <reaction evidence="1">
        <text>S-(5-deoxy-D-ribos-5-yl)-L-homocysteine = (S)-4,5-dihydroxypentane-2,3-dione + L-homocysteine</text>
        <dbReference type="Rhea" id="RHEA:17753"/>
        <dbReference type="ChEBI" id="CHEBI:29484"/>
        <dbReference type="ChEBI" id="CHEBI:58195"/>
        <dbReference type="ChEBI" id="CHEBI:58199"/>
        <dbReference type="EC" id="4.4.1.21"/>
    </reaction>
</comment>
<comment type="cofactor">
    <cofactor evidence="1">
        <name>Fe cation</name>
        <dbReference type="ChEBI" id="CHEBI:24875"/>
    </cofactor>
    <text evidence="1">Binds 1 Fe cation per subunit.</text>
</comment>
<comment type="subunit">
    <text evidence="1">Homodimer.</text>
</comment>
<comment type="similarity">
    <text evidence="1">Belongs to the LuxS family.</text>
</comment>
<dbReference type="EC" id="4.4.1.21" evidence="1"/>
<dbReference type="EMBL" id="CP000246">
    <property type="protein sequence ID" value="ABG83205.1"/>
    <property type="molecule type" value="Genomic_DNA"/>
</dbReference>
<dbReference type="RefSeq" id="WP_011590095.1">
    <property type="nucleotide sequence ID" value="NC_008261.1"/>
</dbReference>
<dbReference type="SMR" id="Q0TUQ5"/>
<dbReference type="STRING" id="195103.CPF_0171"/>
<dbReference type="PaxDb" id="195103-CPF_0171"/>
<dbReference type="KEGG" id="cpf:CPF_0171"/>
<dbReference type="eggNOG" id="COG1854">
    <property type="taxonomic scope" value="Bacteria"/>
</dbReference>
<dbReference type="HOGENOM" id="CLU_107531_2_0_9"/>
<dbReference type="Proteomes" id="UP000001823">
    <property type="component" value="Chromosome"/>
</dbReference>
<dbReference type="GO" id="GO:0005506">
    <property type="term" value="F:iron ion binding"/>
    <property type="evidence" value="ECO:0007669"/>
    <property type="project" value="InterPro"/>
</dbReference>
<dbReference type="GO" id="GO:0043768">
    <property type="term" value="F:S-ribosylhomocysteine lyase activity"/>
    <property type="evidence" value="ECO:0007669"/>
    <property type="project" value="UniProtKB-UniRule"/>
</dbReference>
<dbReference type="GO" id="GO:0009372">
    <property type="term" value="P:quorum sensing"/>
    <property type="evidence" value="ECO:0007669"/>
    <property type="project" value="UniProtKB-UniRule"/>
</dbReference>
<dbReference type="Gene3D" id="3.30.1360.80">
    <property type="entry name" value="S-ribosylhomocysteinase (LuxS)"/>
    <property type="match status" value="1"/>
</dbReference>
<dbReference type="HAMAP" id="MF_00091">
    <property type="entry name" value="LuxS"/>
    <property type="match status" value="1"/>
</dbReference>
<dbReference type="InterPro" id="IPR037005">
    <property type="entry name" value="LuxS_sf"/>
</dbReference>
<dbReference type="InterPro" id="IPR011249">
    <property type="entry name" value="Metalloenz_LuxS/M16"/>
</dbReference>
<dbReference type="InterPro" id="IPR003815">
    <property type="entry name" value="S-ribosylhomocysteinase"/>
</dbReference>
<dbReference type="NCBIfam" id="NF002604">
    <property type="entry name" value="PRK02260.1-4"/>
    <property type="match status" value="1"/>
</dbReference>
<dbReference type="NCBIfam" id="NF002606">
    <property type="entry name" value="PRK02260.2-4"/>
    <property type="match status" value="1"/>
</dbReference>
<dbReference type="PANTHER" id="PTHR35799">
    <property type="entry name" value="S-RIBOSYLHOMOCYSTEINE LYASE"/>
    <property type="match status" value="1"/>
</dbReference>
<dbReference type="PANTHER" id="PTHR35799:SF1">
    <property type="entry name" value="S-RIBOSYLHOMOCYSTEINE LYASE"/>
    <property type="match status" value="1"/>
</dbReference>
<dbReference type="Pfam" id="PF02664">
    <property type="entry name" value="LuxS"/>
    <property type="match status" value="1"/>
</dbReference>
<dbReference type="PIRSF" id="PIRSF006160">
    <property type="entry name" value="AI2"/>
    <property type="match status" value="1"/>
</dbReference>
<dbReference type="PRINTS" id="PR01487">
    <property type="entry name" value="LUXSPROTEIN"/>
</dbReference>
<dbReference type="SUPFAM" id="SSF63411">
    <property type="entry name" value="LuxS/MPP-like metallohydrolase"/>
    <property type="match status" value="1"/>
</dbReference>
<gene>
    <name evidence="1" type="primary">luxS</name>
    <name type="ordered locus">CPF_0171</name>
</gene>
<protein>
    <recommendedName>
        <fullName evidence="1">S-ribosylhomocysteine lyase</fullName>
        <ecNumber evidence="1">4.4.1.21</ecNumber>
    </recommendedName>
    <alternativeName>
        <fullName evidence="1">AI-2 synthesis protein</fullName>
    </alternativeName>
    <alternativeName>
        <fullName evidence="1">Autoinducer-2 production protein LuxS</fullName>
    </alternativeName>
</protein>
<reference key="1">
    <citation type="journal article" date="2006" name="Genome Res.">
        <title>Skewed genomic variability in strains of the toxigenic bacterial pathogen, Clostridium perfringens.</title>
        <authorList>
            <person name="Myers G.S.A."/>
            <person name="Rasko D.A."/>
            <person name="Cheung J.K."/>
            <person name="Ravel J."/>
            <person name="Seshadri R."/>
            <person name="DeBoy R.T."/>
            <person name="Ren Q."/>
            <person name="Varga J."/>
            <person name="Awad M.M."/>
            <person name="Brinkac L.M."/>
            <person name="Daugherty S.C."/>
            <person name="Haft D.H."/>
            <person name="Dodson R.J."/>
            <person name="Madupu R."/>
            <person name="Nelson W.C."/>
            <person name="Rosovitz M.J."/>
            <person name="Sullivan S.A."/>
            <person name="Khouri H."/>
            <person name="Dimitrov G.I."/>
            <person name="Watkins K.L."/>
            <person name="Mulligan S."/>
            <person name="Benton J."/>
            <person name="Radune D."/>
            <person name="Fisher D.J."/>
            <person name="Atkins H.S."/>
            <person name="Hiscox T."/>
            <person name="Jost B.H."/>
            <person name="Billington S.J."/>
            <person name="Songer J.G."/>
            <person name="McClane B.A."/>
            <person name="Titball R.W."/>
            <person name="Rood J.I."/>
            <person name="Melville S.B."/>
            <person name="Paulsen I.T."/>
        </authorList>
    </citation>
    <scope>NUCLEOTIDE SEQUENCE [LARGE SCALE GENOMIC DNA]</scope>
    <source>
        <strain>ATCC 13124 / DSM 756 / JCM 1290 / NCIMB 6125 / NCTC 8237 / S 107 / Type A</strain>
    </source>
</reference>
<feature type="chain" id="PRO_0000297991" description="S-ribosylhomocysteine lyase">
    <location>
        <begin position="1"/>
        <end position="151"/>
    </location>
</feature>
<feature type="binding site" evidence="1">
    <location>
        <position position="54"/>
    </location>
    <ligand>
        <name>Fe cation</name>
        <dbReference type="ChEBI" id="CHEBI:24875"/>
    </ligand>
</feature>
<feature type="binding site" evidence="1">
    <location>
        <position position="58"/>
    </location>
    <ligand>
        <name>Fe cation</name>
        <dbReference type="ChEBI" id="CHEBI:24875"/>
    </ligand>
</feature>
<feature type="binding site" evidence="1">
    <location>
        <position position="121"/>
    </location>
    <ligand>
        <name>Fe cation</name>
        <dbReference type="ChEBI" id="CHEBI:24875"/>
    </ligand>
</feature>
<evidence type="ECO:0000255" key="1">
    <source>
        <dbReference type="HAMAP-Rule" id="MF_00091"/>
    </source>
</evidence>